<gene>
    <name type="primary">STX19</name>
</gene>
<proteinExistence type="evidence at protein level"/>
<reference key="1">
    <citation type="submission" date="2001-12" db="EMBL/GenBank/DDBJ databases">
        <title>Cloning, expression and characterization of a novel human SNARE protein syntaxin-19 in MDCK cells.</title>
        <authorList>
            <person name="Zhang Z."/>
            <person name="Low S.H."/>
            <person name="Li X."/>
            <person name="Miura M."/>
            <person name="Kudo N."/>
            <person name="Hofmann K."/>
            <person name="Weimbs T."/>
        </authorList>
    </citation>
    <scope>NUCLEOTIDE SEQUENCE [MRNA]</scope>
</reference>
<reference key="2">
    <citation type="journal article" date="2004" name="Genome Res.">
        <title>The status, quality, and expansion of the NIH full-length cDNA project: the Mammalian Gene Collection (MGC).</title>
        <authorList>
            <consortium name="The MGC Project Team"/>
        </authorList>
    </citation>
    <scope>NUCLEOTIDE SEQUENCE [LARGE SCALE MRNA]</scope>
    <source>
        <tissue>Skin</tissue>
    </source>
</reference>
<reference key="3">
    <citation type="journal article" date="2006" name="Traffic">
        <title>Syntaxin 9 is enriched in skin hair follicle epithelium and interacts with the epidermal growth factor receptor.</title>
        <authorList>
            <person name="Wang Y."/>
            <person name="Foo L.Y."/>
            <person name="Guo K."/>
            <person name="Gan B.Q."/>
            <person name="Zeng Q."/>
            <person name="Hong W."/>
            <person name="Tang B.L."/>
        </authorList>
    </citation>
    <scope>INTERACTION WITH EGFR</scope>
</reference>
<keyword id="KW-1003">Cell membrane</keyword>
<keyword id="KW-0175">Coiled coil</keyword>
<keyword id="KW-0963">Cytoplasm</keyword>
<keyword id="KW-0472">Membrane</keyword>
<keyword id="KW-1267">Proteomics identification</keyword>
<keyword id="KW-1185">Reference proteome</keyword>
<keyword id="KW-0813">Transport</keyword>
<accession>Q8N4C7</accession>
<dbReference type="EMBL" id="AF461456">
    <property type="protein sequence ID" value="AAQ04780.1"/>
    <property type="molecule type" value="mRNA"/>
</dbReference>
<dbReference type="EMBL" id="BC034696">
    <property type="protein sequence ID" value="AAH34696.1"/>
    <property type="molecule type" value="mRNA"/>
</dbReference>
<dbReference type="CCDS" id="CCDS33793.1"/>
<dbReference type="RefSeq" id="NP_001001850.1">
    <property type="nucleotide sequence ID" value="NM_001001850.3"/>
</dbReference>
<dbReference type="RefSeq" id="XP_011511144.1">
    <property type="nucleotide sequence ID" value="XM_011512842.3"/>
</dbReference>
<dbReference type="RefSeq" id="XP_054202516.1">
    <property type="nucleotide sequence ID" value="XM_054346541.1"/>
</dbReference>
<dbReference type="SMR" id="Q8N4C7"/>
<dbReference type="BioGRID" id="136105">
    <property type="interactions" value="27"/>
</dbReference>
<dbReference type="FunCoup" id="Q8N4C7">
    <property type="interactions" value="144"/>
</dbReference>
<dbReference type="IntAct" id="Q8N4C7">
    <property type="interactions" value="34"/>
</dbReference>
<dbReference type="MINT" id="Q8N4C7"/>
<dbReference type="STRING" id="9606.ENSP00000320679"/>
<dbReference type="TCDB" id="8.A.91.1.8">
    <property type="family name" value="the syntaxin (syntaxin) family"/>
</dbReference>
<dbReference type="iPTMnet" id="Q8N4C7"/>
<dbReference type="PhosphoSitePlus" id="Q8N4C7"/>
<dbReference type="SwissPalm" id="Q8N4C7"/>
<dbReference type="BioMuta" id="STX19"/>
<dbReference type="DMDM" id="74728839"/>
<dbReference type="jPOST" id="Q8N4C7"/>
<dbReference type="MassIVE" id="Q8N4C7"/>
<dbReference type="PaxDb" id="9606-ENSP00000320679"/>
<dbReference type="PeptideAtlas" id="Q8N4C7"/>
<dbReference type="ProteomicsDB" id="71916"/>
<dbReference type="Antibodypedia" id="32081">
    <property type="antibodies" value="121 antibodies from 19 providers"/>
</dbReference>
<dbReference type="DNASU" id="415117"/>
<dbReference type="Ensembl" id="ENST00000315099.3">
    <property type="protein sequence ID" value="ENSP00000320679.2"/>
    <property type="gene ID" value="ENSG00000178750.3"/>
</dbReference>
<dbReference type="GeneID" id="415117"/>
<dbReference type="KEGG" id="hsa:415117"/>
<dbReference type="MANE-Select" id="ENST00000315099.3">
    <property type="protein sequence ID" value="ENSP00000320679.2"/>
    <property type="RefSeq nucleotide sequence ID" value="NM_001001850.3"/>
    <property type="RefSeq protein sequence ID" value="NP_001001850.1"/>
</dbReference>
<dbReference type="UCSC" id="uc003drh.2">
    <property type="organism name" value="human"/>
</dbReference>
<dbReference type="AGR" id="HGNC:19300"/>
<dbReference type="CTD" id="415117"/>
<dbReference type="GeneCards" id="STX19"/>
<dbReference type="HGNC" id="HGNC:19300">
    <property type="gene designation" value="STX19"/>
</dbReference>
<dbReference type="HPA" id="ENSG00000178750">
    <property type="expression patterns" value="Tissue enhanced (epididymis, intestine)"/>
</dbReference>
<dbReference type="neXtProt" id="NX_Q8N4C7"/>
<dbReference type="OpenTargets" id="ENSG00000178750"/>
<dbReference type="PharmGKB" id="PA142670857"/>
<dbReference type="VEuPathDB" id="HostDB:ENSG00000178750"/>
<dbReference type="eggNOG" id="KOG0810">
    <property type="taxonomic scope" value="Eukaryota"/>
</dbReference>
<dbReference type="GeneTree" id="ENSGT01050000244948"/>
<dbReference type="HOGENOM" id="CLU_042423_2_0_1"/>
<dbReference type="InParanoid" id="Q8N4C7"/>
<dbReference type="OMA" id="CKAICCW"/>
<dbReference type="OrthoDB" id="10255013at2759"/>
<dbReference type="PAN-GO" id="Q8N4C7">
    <property type="GO annotations" value="12 GO annotations based on evolutionary models"/>
</dbReference>
<dbReference type="PhylomeDB" id="Q8N4C7"/>
<dbReference type="TreeFam" id="TF313763"/>
<dbReference type="PathwayCommons" id="Q8N4C7"/>
<dbReference type="SignaLink" id="Q8N4C7"/>
<dbReference type="BioGRID-ORCS" id="415117">
    <property type="hits" value="15 hits in 1145 CRISPR screens"/>
</dbReference>
<dbReference type="GenomeRNAi" id="415117"/>
<dbReference type="Pharos" id="Q8N4C7">
    <property type="development level" value="Tdark"/>
</dbReference>
<dbReference type="PRO" id="PR:Q8N4C7"/>
<dbReference type="Proteomes" id="UP000005640">
    <property type="component" value="Chromosome 3"/>
</dbReference>
<dbReference type="RNAct" id="Q8N4C7">
    <property type="molecule type" value="protein"/>
</dbReference>
<dbReference type="Bgee" id="ENSG00000178750">
    <property type="expression patterns" value="Expressed in mucosa of transverse colon and 112 other cell types or tissues"/>
</dbReference>
<dbReference type="GO" id="GO:0012505">
    <property type="term" value="C:endomembrane system"/>
    <property type="evidence" value="ECO:0000318"/>
    <property type="project" value="GO_Central"/>
</dbReference>
<dbReference type="GO" id="GO:0005886">
    <property type="term" value="C:plasma membrane"/>
    <property type="evidence" value="ECO:0000318"/>
    <property type="project" value="GO_Central"/>
</dbReference>
<dbReference type="GO" id="GO:0048787">
    <property type="term" value="C:presynaptic active zone membrane"/>
    <property type="evidence" value="ECO:0000318"/>
    <property type="project" value="GO_Central"/>
</dbReference>
<dbReference type="GO" id="GO:0031201">
    <property type="term" value="C:SNARE complex"/>
    <property type="evidence" value="ECO:0000318"/>
    <property type="project" value="GO_Central"/>
</dbReference>
<dbReference type="GO" id="GO:0005484">
    <property type="term" value="F:SNAP receptor activity"/>
    <property type="evidence" value="ECO:0000318"/>
    <property type="project" value="GO_Central"/>
</dbReference>
<dbReference type="GO" id="GO:0000149">
    <property type="term" value="F:SNARE binding"/>
    <property type="evidence" value="ECO:0000318"/>
    <property type="project" value="GO_Central"/>
</dbReference>
<dbReference type="GO" id="GO:0006887">
    <property type="term" value="P:exocytosis"/>
    <property type="evidence" value="ECO:0000318"/>
    <property type="project" value="GO_Central"/>
</dbReference>
<dbReference type="GO" id="GO:0006886">
    <property type="term" value="P:intracellular protein transport"/>
    <property type="evidence" value="ECO:0000318"/>
    <property type="project" value="GO_Central"/>
</dbReference>
<dbReference type="GO" id="GO:0031629">
    <property type="term" value="P:synaptic vesicle fusion to presynaptic active zone membrane"/>
    <property type="evidence" value="ECO:0000318"/>
    <property type="project" value="GO_Central"/>
</dbReference>
<dbReference type="GO" id="GO:0048278">
    <property type="term" value="P:vesicle docking"/>
    <property type="evidence" value="ECO:0000318"/>
    <property type="project" value="GO_Central"/>
</dbReference>
<dbReference type="CDD" id="cd15879">
    <property type="entry name" value="SNARE_syntaxin19"/>
    <property type="match status" value="1"/>
</dbReference>
<dbReference type="CDD" id="cd00179">
    <property type="entry name" value="SynN"/>
    <property type="match status" value="1"/>
</dbReference>
<dbReference type="FunFam" id="1.20.5.110:FF:000022">
    <property type="entry name" value="Syntaxin 19"/>
    <property type="match status" value="1"/>
</dbReference>
<dbReference type="FunFam" id="1.20.58.70:FF:000017">
    <property type="entry name" value="Syntaxin 19"/>
    <property type="match status" value="1"/>
</dbReference>
<dbReference type="Gene3D" id="1.20.5.110">
    <property type="match status" value="1"/>
</dbReference>
<dbReference type="Gene3D" id="1.20.58.70">
    <property type="match status" value="1"/>
</dbReference>
<dbReference type="InterPro" id="IPR010989">
    <property type="entry name" value="SNARE"/>
</dbReference>
<dbReference type="InterPro" id="IPR045242">
    <property type="entry name" value="Syntaxin"/>
</dbReference>
<dbReference type="InterPro" id="IPR006012">
    <property type="entry name" value="Syntaxin/epimorphin_CS"/>
</dbReference>
<dbReference type="InterPro" id="IPR006011">
    <property type="entry name" value="Syntaxin_N"/>
</dbReference>
<dbReference type="InterPro" id="IPR000727">
    <property type="entry name" value="T_SNARE_dom"/>
</dbReference>
<dbReference type="PANTHER" id="PTHR19957">
    <property type="entry name" value="SYNTAXIN"/>
    <property type="match status" value="1"/>
</dbReference>
<dbReference type="PANTHER" id="PTHR19957:SF29">
    <property type="entry name" value="SYNTAXIN-19"/>
    <property type="match status" value="1"/>
</dbReference>
<dbReference type="Pfam" id="PF00804">
    <property type="entry name" value="Syntaxin"/>
    <property type="match status" value="1"/>
</dbReference>
<dbReference type="SMART" id="SM00397">
    <property type="entry name" value="t_SNARE"/>
    <property type="match status" value="1"/>
</dbReference>
<dbReference type="SUPFAM" id="SSF47661">
    <property type="entry name" value="t-snare proteins"/>
    <property type="match status" value="1"/>
</dbReference>
<dbReference type="PROSITE" id="PS00914">
    <property type="entry name" value="SYNTAXIN"/>
    <property type="match status" value="1"/>
</dbReference>
<dbReference type="PROSITE" id="PS50192">
    <property type="entry name" value="T_SNARE"/>
    <property type="match status" value="1"/>
</dbReference>
<feature type="chain" id="PRO_0000263709" description="Syntaxin-19">
    <location>
        <begin position="1"/>
        <end position="294"/>
    </location>
</feature>
<feature type="domain" description="t-SNARE coiled-coil homology" evidence="2">
    <location>
        <begin position="209"/>
        <end position="271"/>
    </location>
</feature>
<evidence type="ECO:0000250" key="1">
    <source>
        <dbReference type="UniProtKB" id="Q8R1Q0"/>
    </source>
</evidence>
<evidence type="ECO:0000255" key="2">
    <source>
        <dbReference type="PROSITE-ProRule" id="PRU00202"/>
    </source>
</evidence>
<evidence type="ECO:0000269" key="3">
    <source>
    </source>
</evidence>
<evidence type="ECO:0000305" key="4"/>
<protein>
    <recommendedName>
        <fullName>Syntaxin-19</fullName>
    </recommendedName>
</protein>
<name>STX19_HUMAN</name>
<comment type="function">
    <text evidence="1">Plays a role in endosomal trafficking of the epidermal growth factor receptor (EGFR).</text>
</comment>
<comment type="subunit">
    <text evidence="3">Interacts with EGFR.</text>
</comment>
<comment type="interaction">
    <interactant intactId="EBI-8484990">
        <id>Q8N4C7</id>
    </interactant>
    <interactant intactId="EBI-640741">
        <id>P01023</id>
        <label>A2M</label>
    </interactant>
    <organismsDiffer>false</organismsDiffer>
    <experiments>3</experiments>
</comment>
<comment type="interaction">
    <interactant intactId="EBI-8484990">
        <id>Q8N4C7</id>
    </interactant>
    <interactant intactId="EBI-11096309">
        <id>Q9NYB9-2</id>
        <label>ABI2</label>
    </interactant>
    <organismsDiffer>false</organismsDiffer>
    <experiments>3</experiments>
</comment>
<comment type="interaction">
    <interactant intactId="EBI-8484990">
        <id>Q8N4C7</id>
    </interactant>
    <interactant intactId="EBI-25837549">
        <id>P28329-3</id>
        <label>CHAT</label>
    </interactant>
    <organismsDiffer>false</organismsDiffer>
    <experiments>3</experiments>
</comment>
<comment type="interaction">
    <interactant intactId="EBI-8484990">
        <id>Q8N4C7</id>
    </interactant>
    <interactant intactId="EBI-10968534">
        <id>P50570-2</id>
        <label>DNM2</label>
    </interactant>
    <organismsDiffer>false</organismsDiffer>
    <experiments>3</experiments>
</comment>
<comment type="interaction">
    <interactant intactId="EBI-8484990">
        <id>Q8N4C7</id>
    </interactant>
    <interactant intactId="EBI-348399">
        <id>P22607</id>
        <label>FGFR3</label>
    </interactant>
    <organismsDiffer>false</organismsDiffer>
    <experiments>3</experiments>
</comment>
<comment type="interaction">
    <interactant intactId="EBI-8484990">
        <id>Q8N4C7</id>
    </interactant>
    <interactant intactId="EBI-351506">
        <id>P06396</id>
        <label>GSN</label>
    </interactant>
    <organismsDiffer>false</organismsDiffer>
    <experiments>3</experiments>
</comment>
<comment type="interaction">
    <interactant intactId="EBI-8484990">
        <id>Q8N4C7</id>
    </interactant>
    <interactant intactId="EBI-350145">
        <id>P01112</id>
        <label>HRAS</label>
    </interactant>
    <organismsDiffer>false</organismsDiffer>
    <experiments>3</experiments>
</comment>
<comment type="interaction">
    <interactant intactId="EBI-8484990">
        <id>Q8N4C7</id>
    </interactant>
    <interactant intactId="EBI-710124">
        <id>O60341</id>
        <label>KDM1A</label>
    </interactant>
    <organismsDiffer>false</organismsDiffer>
    <experiments>2</experiments>
</comment>
<comment type="interaction">
    <interactant intactId="EBI-8484990">
        <id>Q8N4C7</id>
    </interactant>
    <interactant intactId="EBI-948266">
        <id>O14901</id>
        <label>KLF11</label>
    </interactant>
    <organismsDiffer>false</organismsDiffer>
    <experiments>3</experiments>
</comment>
<comment type="interaction">
    <interactant intactId="EBI-8484990">
        <id>Q8N4C7</id>
    </interactant>
    <interactant intactId="EBI-3921185">
        <id>Q9H115</id>
        <label>NAPB</label>
    </interactant>
    <organismsDiffer>false</organismsDiffer>
    <experiments>3</experiments>
</comment>
<comment type="interaction">
    <interactant intactId="EBI-8484990">
        <id>Q8N4C7</id>
    </interactant>
    <interactant intactId="EBI-2811583">
        <id>Q9BVL2</id>
        <label>NUP58</label>
    </interactant>
    <organismsDiffer>false</organismsDiffer>
    <experiments>3</experiments>
</comment>
<comment type="interaction">
    <interactant intactId="EBI-8484990">
        <id>Q8N4C7</id>
    </interactant>
    <interactant intactId="EBI-1053424">
        <id>O43741</id>
        <label>PRKAB2</label>
    </interactant>
    <organismsDiffer>false</organismsDiffer>
    <experiments>4</experiments>
</comment>
<comment type="interaction">
    <interactant intactId="EBI-8484990">
        <id>Q8N4C7</id>
    </interactant>
    <interactant intactId="EBI-748391">
        <id>Q9BWG6</id>
        <label>SCNM1</label>
    </interactant>
    <organismsDiffer>false</organismsDiffer>
    <experiments>3</experiments>
</comment>
<comment type="interaction">
    <interactant intactId="EBI-8484990">
        <id>Q8N4C7</id>
    </interactant>
    <interactant intactId="EBI-12177361">
        <id>P60880-2</id>
        <label>SNAP25</label>
    </interactant>
    <organismsDiffer>false</organismsDiffer>
    <experiments>3</experiments>
</comment>
<comment type="interaction">
    <interactant intactId="EBI-8484990">
        <id>Q8N4C7</id>
    </interactant>
    <interactant intactId="EBI-5235340">
        <id>Q7Z699</id>
        <label>SPRED1</label>
    </interactant>
    <organismsDiffer>false</organismsDiffer>
    <experiments>3</experiments>
</comment>
<comment type="interaction">
    <interactant intactId="EBI-8484990">
        <id>Q8N4C7</id>
    </interactant>
    <interactant intactId="EBI-960169">
        <id>P61764</id>
        <label>STXBP1</label>
    </interactant>
    <organismsDiffer>false</organismsDiffer>
    <experiments>11</experiments>
</comment>
<comment type="interaction">
    <interactant intactId="EBI-8484990">
        <id>Q8N4C7</id>
    </interactant>
    <interactant intactId="EBI-740595">
        <id>Q9UMX1</id>
        <label>SUFU</label>
    </interactant>
    <organismsDiffer>false</organismsDiffer>
    <experiments>3</experiments>
</comment>
<comment type="interaction">
    <interactant intactId="EBI-8484990">
        <id>Q8N4C7</id>
    </interactant>
    <interactant intactId="EBI-349968">
        <id>O43463</id>
        <label>SUV39H1</label>
    </interactant>
    <organismsDiffer>false</organismsDiffer>
    <experiments>2</experiments>
</comment>
<comment type="interaction">
    <interactant intactId="EBI-8484990">
        <id>Q8N4C7</id>
    </interactant>
    <interactant intactId="EBI-6872807">
        <id>Q8N0S2</id>
        <label>SYCE1</label>
    </interactant>
    <organismsDiffer>false</organismsDiffer>
    <experiments>3</experiments>
</comment>
<comment type="interaction">
    <interactant intactId="EBI-8484990">
        <id>Q8N4C7</id>
    </interactant>
    <interactant intactId="EBI-373456">
        <id>Q9Y3S2</id>
        <label>ZNF330</label>
    </interactant>
    <organismsDiffer>false</organismsDiffer>
    <experiments>3</experiments>
</comment>
<comment type="subcellular location">
    <subcellularLocation>
        <location evidence="1">Cell membrane</location>
        <topology evidence="1">Peripheral membrane protein</topology>
    </subcellularLocation>
    <subcellularLocation>
        <location evidence="1">Cytoplasm</location>
    </subcellularLocation>
</comment>
<comment type="similarity">
    <text evidence="4">Belongs to the syntaxin family.</text>
</comment>
<organism>
    <name type="scientific">Homo sapiens</name>
    <name type="common">Human</name>
    <dbReference type="NCBI Taxonomy" id="9606"/>
    <lineage>
        <taxon>Eukaryota</taxon>
        <taxon>Metazoa</taxon>
        <taxon>Chordata</taxon>
        <taxon>Craniata</taxon>
        <taxon>Vertebrata</taxon>
        <taxon>Euteleostomi</taxon>
        <taxon>Mammalia</taxon>
        <taxon>Eutheria</taxon>
        <taxon>Euarchontoglires</taxon>
        <taxon>Primates</taxon>
        <taxon>Haplorrhini</taxon>
        <taxon>Catarrhini</taxon>
        <taxon>Hominidae</taxon>
        <taxon>Homo</taxon>
    </lineage>
</organism>
<sequence length="294" mass="34324">MKDRLQELKQRTKEIELSRDSHVSTTETEEQGVFLQQAVIYEREPVAERHLHEIQKLQESINNLADNVQKFGQQQKSLVASMRRFSLLKRESTITKEIKIQAEYINRSLNDLVKEVKKSEVENGPSSVVTRILKSQHAAMFRHFQQIMFIYNDTIAAKQEKCKTFILRQLEVAGKEMSEEDVNDMLHQGKWEVFNESLLTEINITKAQLSEIEQRHKELVNLENQIKDLRDLFIQISLLVEEQGESINNIEMTVNSTKEYVNNTKEKFGLAVKYKKRNPCRVLCCWCCPCCSSK</sequence>